<evidence type="ECO:0000250" key="1"/>
<evidence type="ECO:0000305" key="2"/>
<keyword id="KW-0479">Metal-binding</keyword>
<keyword id="KW-0520">NAD</keyword>
<keyword id="KW-0560">Oxidoreductase</keyword>
<keyword id="KW-0862">Zinc</keyword>
<gene>
    <name type="primary">adh</name>
    <name type="ordered locus">SAB0557</name>
</gene>
<accession>Q2YSX0</accession>
<comment type="catalytic activity">
    <reaction>
        <text>a primary alcohol + NAD(+) = an aldehyde + NADH + H(+)</text>
        <dbReference type="Rhea" id="RHEA:10736"/>
        <dbReference type="ChEBI" id="CHEBI:15378"/>
        <dbReference type="ChEBI" id="CHEBI:15734"/>
        <dbReference type="ChEBI" id="CHEBI:17478"/>
        <dbReference type="ChEBI" id="CHEBI:57540"/>
        <dbReference type="ChEBI" id="CHEBI:57945"/>
        <dbReference type="EC" id="1.1.1.1"/>
    </reaction>
</comment>
<comment type="catalytic activity">
    <reaction>
        <text>a secondary alcohol + NAD(+) = a ketone + NADH + H(+)</text>
        <dbReference type="Rhea" id="RHEA:10740"/>
        <dbReference type="ChEBI" id="CHEBI:15378"/>
        <dbReference type="ChEBI" id="CHEBI:17087"/>
        <dbReference type="ChEBI" id="CHEBI:35681"/>
        <dbReference type="ChEBI" id="CHEBI:57540"/>
        <dbReference type="ChEBI" id="CHEBI:57945"/>
        <dbReference type="EC" id="1.1.1.1"/>
    </reaction>
</comment>
<comment type="cofactor">
    <cofactor evidence="1">
        <name>Zn(2+)</name>
        <dbReference type="ChEBI" id="CHEBI:29105"/>
    </cofactor>
    <text evidence="1">Binds 2 Zn(2+) ions per subunit.</text>
</comment>
<comment type="similarity">
    <text evidence="2">Belongs to the zinc-containing alcohol dehydrogenase family.</text>
</comment>
<feature type="chain" id="PRO_0000273034" description="Alcohol dehydrogenase">
    <location>
        <begin position="1"/>
        <end position="336"/>
    </location>
</feature>
<feature type="binding site" evidence="1">
    <location>
        <position position="37"/>
    </location>
    <ligand>
        <name>Zn(2+)</name>
        <dbReference type="ChEBI" id="CHEBI:29105"/>
        <label>1</label>
        <note>catalytic</note>
    </ligand>
</feature>
<feature type="binding site" evidence="1">
    <location>
        <position position="58"/>
    </location>
    <ligand>
        <name>Zn(2+)</name>
        <dbReference type="ChEBI" id="CHEBI:29105"/>
        <label>1</label>
        <note>catalytic</note>
    </ligand>
</feature>
<feature type="binding site" evidence="1">
    <location>
        <position position="89"/>
    </location>
    <ligand>
        <name>Zn(2+)</name>
        <dbReference type="ChEBI" id="CHEBI:29105"/>
        <label>2</label>
    </ligand>
</feature>
<feature type="binding site" evidence="1">
    <location>
        <position position="92"/>
    </location>
    <ligand>
        <name>Zn(2+)</name>
        <dbReference type="ChEBI" id="CHEBI:29105"/>
        <label>2</label>
    </ligand>
</feature>
<feature type="binding site" evidence="1">
    <location>
        <position position="95"/>
    </location>
    <ligand>
        <name>Zn(2+)</name>
        <dbReference type="ChEBI" id="CHEBI:29105"/>
        <label>2</label>
    </ligand>
</feature>
<feature type="binding site" evidence="1">
    <location>
        <position position="103"/>
    </location>
    <ligand>
        <name>Zn(2+)</name>
        <dbReference type="ChEBI" id="CHEBI:29105"/>
        <label>2</label>
    </ligand>
</feature>
<feature type="binding site" evidence="1">
    <location>
        <position position="145"/>
    </location>
    <ligand>
        <name>Zn(2+)</name>
        <dbReference type="ChEBI" id="CHEBI:29105"/>
        <label>1</label>
        <note>catalytic</note>
    </ligand>
</feature>
<dbReference type="EC" id="1.1.1.1"/>
<dbReference type="EMBL" id="AJ938182">
    <property type="protein sequence ID" value="CAI80245.1"/>
    <property type="molecule type" value="Genomic_DNA"/>
</dbReference>
<dbReference type="SMR" id="Q2YSX0"/>
<dbReference type="KEGG" id="sab:SAB0557"/>
<dbReference type="HOGENOM" id="CLU_026673_20_1_9"/>
<dbReference type="GO" id="GO:0004022">
    <property type="term" value="F:alcohol dehydrogenase (NAD+) activity"/>
    <property type="evidence" value="ECO:0007669"/>
    <property type="project" value="UniProtKB-EC"/>
</dbReference>
<dbReference type="GO" id="GO:0008270">
    <property type="term" value="F:zinc ion binding"/>
    <property type="evidence" value="ECO:0007669"/>
    <property type="project" value="InterPro"/>
</dbReference>
<dbReference type="CDD" id="cd08297">
    <property type="entry name" value="CAD3"/>
    <property type="match status" value="1"/>
</dbReference>
<dbReference type="FunFam" id="3.40.50.720:FF:000039">
    <property type="entry name" value="Alcohol dehydrogenase AdhP"/>
    <property type="match status" value="1"/>
</dbReference>
<dbReference type="Gene3D" id="3.90.180.10">
    <property type="entry name" value="Medium-chain alcohol dehydrogenases, catalytic domain"/>
    <property type="match status" value="1"/>
</dbReference>
<dbReference type="Gene3D" id="3.40.50.720">
    <property type="entry name" value="NAD(P)-binding Rossmann-like Domain"/>
    <property type="match status" value="1"/>
</dbReference>
<dbReference type="InterPro" id="IPR013149">
    <property type="entry name" value="ADH-like_C"/>
</dbReference>
<dbReference type="InterPro" id="IPR013154">
    <property type="entry name" value="ADH-like_N"/>
</dbReference>
<dbReference type="InterPro" id="IPR002328">
    <property type="entry name" value="ADH_Zn_CS"/>
</dbReference>
<dbReference type="InterPro" id="IPR029752">
    <property type="entry name" value="D-isomer_DH_CS1"/>
</dbReference>
<dbReference type="InterPro" id="IPR011032">
    <property type="entry name" value="GroES-like_sf"/>
</dbReference>
<dbReference type="InterPro" id="IPR036291">
    <property type="entry name" value="NAD(P)-bd_dom_sf"/>
</dbReference>
<dbReference type="InterPro" id="IPR020843">
    <property type="entry name" value="PKS_ER"/>
</dbReference>
<dbReference type="NCBIfam" id="NF006940">
    <property type="entry name" value="PRK09422.1"/>
    <property type="match status" value="1"/>
</dbReference>
<dbReference type="PANTHER" id="PTHR42940">
    <property type="entry name" value="ALCOHOL DEHYDROGENASE 1-RELATED"/>
    <property type="match status" value="1"/>
</dbReference>
<dbReference type="PANTHER" id="PTHR42940:SF8">
    <property type="entry name" value="VACUOLAR PROTEIN SORTING-ASSOCIATED PROTEIN 11"/>
    <property type="match status" value="1"/>
</dbReference>
<dbReference type="Pfam" id="PF08240">
    <property type="entry name" value="ADH_N"/>
    <property type="match status" value="1"/>
</dbReference>
<dbReference type="Pfam" id="PF00107">
    <property type="entry name" value="ADH_zinc_N"/>
    <property type="match status" value="1"/>
</dbReference>
<dbReference type="SMART" id="SM00829">
    <property type="entry name" value="PKS_ER"/>
    <property type="match status" value="1"/>
</dbReference>
<dbReference type="SUPFAM" id="SSF50129">
    <property type="entry name" value="GroES-like"/>
    <property type="match status" value="1"/>
</dbReference>
<dbReference type="SUPFAM" id="SSF51735">
    <property type="entry name" value="NAD(P)-binding Rossmann-fold domains"/>
    <property type="match status" value="1"/>
</dbReference>
<dbReference type="PROSITE" id="PS00059">
    <property type="entry name" value="ADH_ZINC"/>
    <property type="match status" value="1"/>
</dbReference>
<reference key="1">
    <citation type="journal article" date="2007" name="PLoS ONE">
        <title>Molecular correlates of host specialization in Staphylococcus aureus.</title>
        <authorList>
            <person name="Herron-Olson L."/>
            <person name="Fitzgerald J.R."/>
            <person name="Musser J.M."/>
            <person name="Kapur V."/>
        </authorList>
    </citation>
    <scope>NUCLEOTIDE SEQUENCE [LARGE SCALE GENOMIC DNA]</scope>
    <source>
        <strain>bovine RF122 / ET3-1</strain>
    </source>
</reference>
<protein>
    <recommendedName>
        <fullName>Alcohol dehydrogenase</fullName>
        <shortName>ADH</shortName>
        <ecNumber>1.1.1.1</ecNumber>
    </recommendedName>
</protein>
<organism>
    <name type="scientific">Staphylococcus aureus (strain bovine RF122 / ET3-1)</name>
    <dbReference type="NCBI Taxonomy" id="273036"/>
    <lineage>
        <taxon>Bacteria</taxon>
        <taxon>Bacillati</taxon>
        <taxon>Bacillota</taxon>
        <taxon>Bacilli</taxon>
        <taxon>Bacillales</taxon>
        <taxon>Staphylococcaceae</taxon>
        <taxon>Staphylococcus</taxon>
    </lineage>
</organism>
<proteinExistence type="inferred from homology"/>
<name>ADH_STAAB</name>
<sequence>MRAAVVTKDHKVSIEDKKLRALKPGEALVQTEYCGVCHTDLHVKNADFGDVTGVTLGHEGIGKVIEVAEDVESLKIGDRVSIAWMFESCGRCEYCTTGRETLCRSVKNAGYTVDGAMAEQVIVTADYAVKVPEKLDPAAASSITCAGVTTYKAVKVSNVKPGQWLGVFGIGGLGNLALQYAKNVMGAKIVAFDINDDKLAFAKELGADAIINSKDVDPVAEVMKLTDNKGLDATVVTSVAKTPFNQAVDVVKAGARVVAVGLPVDKMNLDIPRLVLDGIEVVGSLVGTRQDLREAFEFAAENKVTPKVQLRKLEEINDIFEEMENGTITGRMVIKF</sequence>